<feature type="chain" id="PRO_0000282754" description="Ribosomal RNA large subunit methyltransferase E">
    <location>
        <begin position="1"/>
        <end position="234"/>
    </location>
</feature>
<feature type="region of interest" description="Disordered" evidence="2">
    <location>
        <begin position="1"/>
        <end position="37"/>
    </location>
</feature>
<feature type="active site" description="Proton acceptor" evidence="1">
    <location>
        <position position="189"/>
    </location>
</feature>
<feature type="binding site" evidence="1">
    <location>
        <position position="91"/>
    </location>
    <ligand>
        <name>S-adenosyl-L-methionine</name>
        <dbReference type="ChEBI" id="CHEBI:59789"/>
    </ligand>
</feature>
<feature type="binding site" evidence="1">
    <location>
        <position position="93"/>
    </location>
    <ligand>
        <name>S-adenosyl-L-methionine</name>
        <dbReference type="ChEBI" id="CHEBI:59789"/>
    </ligand>
</feature>
<feature type="binding site" evidence="1">
    <location>
        <position position="109"/>
    </location>
    <ligand>
        <name>S-adenosyl-L-methionine</name>
        <dbReference type="ChEBI" id="CHEBI:59789"/>
    </ligand>
</feature>
<feature type="binding site" evidence="1">
    <location>
        <position position="125"/>
    </location>
    <ligand>
        <name>S-adenosyl-L-methionine</name>
        <dbReference type="ChEBI" id="CHEBI:59789"/>
    </ligand>
</feature>
<feature type="binding site" evidence="1">
    <location>
        <position position="149"/>
    </location>
    <ligand>
        <name>S-adenosyl-L-methionine</name>
        <dbReference type="ChEBI" id="CHEBI:59789"/>
    </ligand>
</feature>
<evidence type="ECO:0000255" key="1">
    <source>
        <dbReference type="HAMAP-Rule" id="MF_01547"/>
    </source>
</evidence>
<evidence type="ECO:0000256" key="2">
    <source>
        <dbReference type="SAM" id="MobiDB-lite"/>
    </source>
</evidence>
<reference key="1">
    <citation type="journal article" date="2006" name="J. Bacteriol.">
        <title>Comparative genomic evidence for a close relationship between the dimorphic prosthecate bacteria Hyphomonas neptunium and Caulobacter crescentus.</title>
        <authorList>
            <person name="Badger J.H."/>
            <person name="Hoover T.R."/>
            <person name="Brun Y.V."/>
            <person name="Weiner R.M."/>
            <person name="Laub M.T."/>
            <person name="Alexandre G."/>
            <person name="Mrazek J."/>
            <person name="Ren Q."/>
            <person name="Paulsen I.T."/>
            <person name="Nelson K.E."/>
            <person name="Khouri H.M."/>
            <person name="Radune D."/>
            <person name="Sosa J."/>
            <person name="Dodson R.J."/>
            <person name="Sullivan S.A."/>
            <person name="Rosovitz M.J."/>
            <person name="Madupu R."/>
            <person name="Brinkac L.M."/>
            <person name="Durkin A.S."/>
            <person name="Daugherty S.C."/>
            <person name="Kothari S.P."/>
            <person name="Giglio M.G."/>
            <person name="Zhou L."/>
            <person name="Haft D.H."/>
            <person name="Selengut J.D."/>
            <person name="Davidsen T.M."/>
            <person name="Yang Q."/>
            <person name="Zafar N."/>
            <person name="Ward N.L."/>
        </authorList>
    </citation>
    <scope>NUCLEOTIDE SEQUENCE [LARGE SCALE GENOMIC DNA]</scope>
    <source>
        <strain>ATCC 15444</strain>
    </source>
</reference>
<gene>
    <name evidence="1" type="primary">rlmE</name>
    <name evidence="1" type="synonym">ftsJ</name>
    <name evidence="1" type="synonym">rrmJ</name>
    <name type="ordered locus">HNE_1802</name>
</gene>
<protein>
    <recommendedName>
        <fullName evidence="1">Ribosomal RNA large subunit methyltransferase E</fullName>
        <ecNumber evidence="1">2.1.1.166</ecNumber>
    </recommendedName>
    <alternativeName>
        <fullName evidence="1">23S rRNA Um2552 methyltransferase</fullName>
    </alternativeName>
    <alternativeName>
        <fullName evidence="1">rRNA (uridine-2'-O-)-methyltransferase</fullName>
    </alternativeName>
</protein>
<accession>Q0C187</accession>
<dbReference type="EC" id="2.1.1.166" evidence="1"/>
<dbReference type="EMBL" id="CP000158">
    <property type="protein sequence ID" value="ABI77047.1"/>
    <property type="molecule type" value="Genomic_DNA"/>
</dbReference>
<dbReference type="RefSeq" id="WP_011646806.1">
    <property type="nucleotide sequence ID" value="NC_008358.1"/>
</dbReference>
<dbReference type="SMR" id="Q0C187"/>
<dbReference type="STRING" id="228405.HNE_1802"/>
<dbReference type="KEGG" id="hne:HNE_1802"/>
<dbReference type="eggNOG" id="COG0293">
    <property type="taxonomic scope" value="Bacteria"/>
</dbReference>
<dbReference type="HOGENOM" id="CLU_009422_4_0_5"/>
<dbReference type="Proteomes" id="UP000001959">
    <property type="component" value="Chromosome"/>
</dbReference>
<dbReference type="GO" id="GO:0005737">
    <property type="term" value="C:cytoplasm"/>
    <property type="evidence" value="ECO:0007669"/>
    <property type="project" value="UniProtKB-SubCell"/>
</dbReference>
<dbReference type="GO" id="GO:0008650">
    <property type="term" value="F:rRNA (uridine-2'-O-)-methyltransferase activity"/>
    <property type="evidence" value="ECO:0007669"/>
    <property type="project" value="UniProtKB-UniRule"/>
</dbReference>
<dbReference type="Gene3D" id="3.40.50.150">
    <property type="entry name" value="Vaccinia Virus protein VP39"/>
    <property type="match status" value="1"/>
</dbReference>
<dbReference type="HAMAP" id="MF_01547">
    <property type="entry name" value="RNA_methyltr_E"/>
    <property type="match status" value="1"/>
</dbReference>
<dbReference type="InterPro" id="IPR050082">
    <property type="entry name" value="RNA_methyltr_RlmE"/>
</dbReference>
<dbReference type="InterPro" id="IPR002877">
    <property type="entry name" value="RNA_MeTrfase_FtsJ_dom"/>
</dbReference>
<dbReference type="InterPro" id="IPR015507">
    <property type="entry name" value="rRNA-MeTfrase_E"/>
</dbReference>
<dbReference type="InterPro" id="IPR029063">
    <property type="entry name" value="SAM-dependent_MTases_sf"/>
</dbReference>
<dbReference type="PANTHER" id="PTHR10920">
    <property type="entry name" value="RIBOSOMAL RNA METHYLTRANSFERASE"/>
    <property type="match status" value="1"/>
</dbReference>
<dbReference type="PANTHER" id="PTHR10920:SF18">
    <property type="entry name" value="RRNA METHYLTRANSFERASE 2, MITOCHONDRIAL"/>
    <property type="match status" value="1"/>
</dbReference>
<dbReference type="Pfam" id="PF01728">
    <property type="entry name" value="FtsJ"/>
    <property type="match status" value="1"/>
</dbReference>
<dbReference type="PIRSF" id="PIRSF005461">
    <property type="entry name" value="23S_rRNA_mtase"/>
    <property type="match status" value="1"/>
</dbReference>
<dbReference type="SUPFAM" id="SSF53335">
    <property type="entry name" value="S-adenosyl-L-methionine-dependent methyltransferases"/>
    <property type="match status" value="1"/>
</dbReference>
<keyword id="KW-0963">Cytoplasm</keyword>
<keyword id="KW-0489">Methyltransferase</keyword>
<keyword id="KW-1185">Reference proteome</keyword>
<keyword id="KW-0698">rRNA processing</keyword>
<keyword id="KW-0949">S-adenosyl-L-methionine</keyword>
<keyword id="KW-0808">Transferase</keyword>
<comment type="function">
    <text evidence="1">Specifically methylates the uridine in position 2552 of 23S rRNA at the 2'-O position of the ribose in the fully assembled 50S ribosomal subunit.</text>
</comment>
<comment type="catalytic activity">
    <reaction evidence="1">
        <text>uridine(2552) in 23S rRNA + S-adenosyl-L-methionine = 2'-O-methyluridine(2552) in 23S rRNA + S-adenosyl-L-homocysteine + H(+)</text>
        <dbReference type="Rhea" id="RHEA:42720"/>
        <dbReference type="Rhea" id="RHEA-COMP:10202"/>
        <dbReference type="Rhea" id="RHEA-COMP:10203"/>
        <dbReference type="ChEBI" id="CHEBI:15378"/>
        <dbReference type="ChEBI" id="CHEBI:57856"/>
        <dbReference type="ChEBI" id="CHEBI:59789"/>
        <dbReference type="ChEBI" id="CHEBI:65315"/>
        <dbReference type="ChEBI" id="CHEBI:74478"/>
        <dbReference type="EC" id="2.1.1.166"/>
    </reaction>
</comment>
<comment type="subcellular location">
    <subcellularLocation>
        <location evidence="1">Cytoplasm</location>
    </subcellularLocation>
</comment>
<comment type="similarity">
    <text evidence="1">Belongs to the class I-like SAM-binding methyltransferase superfamily. RNA methyltransferase RlmE family.</text>
</comment>
<proteinExistence type="inferred from homology"/>
<sequence length="234" mass="25713">MSDDDRRRWKGPGPERQDSGRRSTERKVIARNARTESSKRWIERQLQDPYVRKAKDEGYRSRAAYKLLEIDAAAKILRKGMRVVDLGCAPGGWIQVSLQQGAAEVVGIDLLPLDPIEGATIIEGDVNNPDDVARMMAGLSGTPDLILSDMAANTTGHKQTDHLRTVALVEMAVAFAIEHLDDGGAFCAKVFQGGATKDVLNLLKQHFRTVKHIKPAASRAGSPEIYVVAKGFRR</sequence>
<organism>
    <name type="scientific">Hyphomonas neptunium (strain ATCC 15444)</name>
    <dbReference type="NCBI Taxonomy" id="228405"/>
    <lineage>
        <taxon>Bacteria</taxon>
        <taxon>Pseudomonadati</taxon>
        <taxon>Pseudomonadota</taxon>
        <taxon>Alphaproteobacteria</taxon>
        <taxon>Hyphomonadales</taxon>
        <taxon>Hyphomonadaceae</taxon>
        <taxon>Hyphomonas</taxon>
    </lineage>
</organism>
<name>RLME_HYPNA</name>